<comment type="catalytic activity">
    <reaction evidence="1">
        <text>(R)-pantothenate + ATP = (R)-4'-phosphopantothenate + ADP + H(+)</text>
        <dbReference type="Rhea" id="RHEA:16373"/>
        <dbReference type="ChEBI" id="CHEBI:10986"/>
        <dbReference type="ChEBI" id="CHEBI:15378"/>
        <dbReference type="ChEBI" id="CHEBI:29032"/>
        <dbReference type="ChEBI" id="CHEBI:30616"/>
        <dbReference type="ChEBI" id="CHEBI:456216"/>
        <dbReference type="EC" id="2.7.1.33"/>
    </reaction>
</comment>
<comment type="pathway">
    <text evidence="1">Cofactor biosynthesis; coenzyme A biosynthesis; CoA from (R)-pantothenate: step 1/5.</text>
</comment>
<comment type="subcellular location">
    <subcellularLocation>
        <location evidence="1">Cytoplasm</location>
    </subcellularLocation>
</comment>
<comment type="similarity">
    <text evidence="1">Belongs to the prokaryotic pantothenate kinase family.</text>
</comment>
<evidence type="ECO:0000255" key="1">
    <source>
        <dbReference type="HAMAP-Rule" id="MF_00215"/>
    </source>
</evidence>
<reference key="1">
    <citation type="journal article" date="2009" name="PLoS Genet.">
        <title>Organised genome dynamics in the Escherichia coli species results in highly diverse adaptive paths.</title>
        <authorList>
            <person name="Touchon M."/>
            <person name="Hoede C."/>
            <person name="Tenaillon O."/>
            <person name="Barbe V."/>
            <person name="Baeriswyl S."/>
            <person name="Bidet P."/>
            <person name="Bingen E."/>
            <person name="Bonacorsi S."/>
            <person name="Bouchier C."/>
            <person name="Bouvet O."/>
            <person name="Calteau A."/>
            <person name="Chiapello H."/>
            <person name="Clermont O."/>
            <person name="Cruveiller S."/>
            <person name="Danchin A."/>
            <person name="Diard M."/>
            <person name="Dossat C."/>
            <person name="Karoui M.E."/>
            <person name="Frapy E."/>
            <person name="Garry L."/>
            <person name="Ghigo J.M."/>
            <person name="Gilles A.M."/>
            <person name="Johnson J."/>
            <person name="Le Bouguenec C."/>
            <person name="Lescat M."/>
            <person name="Mangenot S."/>
            <person name="Martinez-Jehanne V."/>
            <person name="Matic I."/>
            <person name="Nassif X."/>
            <person name="Oztas S."/>
            <person name="Petit M.A."/>
            <person name="Pichon C."/>
            <person name="Rouy Z."/>
            <person name="Ruf C.S."/>
            <person name="Schneider D."/>
            <person name="Tourret J."/>
            <person name="Vacherie B."/>
            <person name="Vallenet D."/>
            <person name="Medigue C."/>
            <person name="Rocha E.P.C."/>
            <person name="Denamur E."/>
        </authorList>
    </citation>
    <scope>NUCLEOTIDE SEQUENCE [LARGE SCALE GENOMIC DNA]</scope>
    <source>
        <strain>IAI39 / ExPEC</strain>
    </source>
</reference>
<sequence>MSIKEQTLMTPYLQFDRNQWAALRDSVPMTLSEDEIARLKGINEDLSLEEVAEIYLPLSRLLNFYISSNLRRQAVLEQFLGTNGQRIPYIISIAGSVAVGKSTTARVLQALLSRWPEHRRVELITTDGFLHPNQVLKERGLMKKKGFPESYDMHRLVKFVSDLKSGVPNVTAPVYSHLIYDVIPDGDKTVVQPDILILEGLNVLQSGMDYPHDPHHVFVSDFVDFSIYVDAPEDLLQTWYINRFLKFREGAFTDPDSYFHNYAKLTKEEAIKTAMTLWKEINWLNLKQNILPTRERASLILTKSANHAVEEVRLRK</sequence>
<keyword id="KW-0067">ATP-binding</keyword>
<keyword id="KW-0173">Coenzyme A biosynthesis</keyword>
<keyword id="KW-0963">Cytoplasm</keyword>
<keyword id="KW-0418">Kinase</keyword>
<keyword id="KW-0547">Nucleotide-binding</keyword>
<keyword id="KW-0808">Transferase</keyword>
<name>COAA_ECO7I</name>
<proteinExistence type="inferred from homology"/>
<accession>B7NR61</accession>
<gene>
    <name evidence="1" type="primary">coaA</name>
    <name type="ordered locus">ECIAI39_4363</name>
</gene>
<organism>
    <name type="scientific">Escherichia coli O7:K1 (strain IAI39 / ExPEC)</name>
    <dbReference type="NCBI Taxonomy" id="585057"/>
    <lineage>
        <taxon>Bacteria</taxon>
        <taxon>Pseudomonadati</taxon>
        <taxon>Pseudomonadota</taxon>
        <taxon>Gammaproteobacteria</taxon>
        <taxon>Enterobacterales</taxon>
        <taxon>Enterobacteriaceae</taxon>
        <taxon>Escherichia</taxon>
    </lineage>
</organism>
<feature type="chain" id="PRO_1000189613" description="Pantothenate kinase">
    <location>
        <begin position="1"/>
        <end position="316"/>
    </location>
</feature>
<feature type="binding site" evidence="1">
    <location>
        <begin position="95"/>
        <end position="102"/>
    </location>
    <ligand>
        <name>ATP</name>
        <dbReference type="ChEBI" id="CHEBI:30616"/>
    </ligand>
</feature>
<protein>
    <recommendedName>
        <fullName evidence="1">Pantothenate kinase</fullName>
        <ecNumber evidence="1">2.7.1.33</ecNumber>
    </recommendedName>
    <alternativeName>
        <fullName evidence="1">Pantothenic acid kinase</fullName>
    </alternativeName>
</protein>
<dbReference type="EC" id="2.7.1.33" evidence="1"/>
<dbReference type="EMBL" id="CU928164">
    <property type="protein sequence ID" value="CAR20469.1"/>
    <property type="molecule type" value="Genomic_DNA"/>
</dbReference>
<dbReference type="RefSeq" id="WP_000023081.1">
    <property type="nucleotide sequence ID" value="NC_011750.1"/>
</dbReference>
<dbReference type="RefSeq" id="YP_002410238.1">
    <property type="nucleotide sequence ID" value="NC_011750.1"/>
</dbReference>
<dbReference type="SMR" id="B7NR61"/>
<dbReference type="STRING" id="585057.ECIAI39_4363"/>
<dbReference type="GeneID" id="93777919"/>
<dbReference type="KEGG" id="ect:ECIAI39_4363"/>
<dbReference type="PATRIC" id="fig|585057.6.peg.4509"/>
<dbReference type="HOGENOM" id="CLU_053818_1_1_6"/>
<dbReference type="UniPathway" id="UPA00241">
    <property type="reaction ID" value="UER00352"/>
</dbReference>
<dbReference type="Proteomes" id="UP000000749">
    <property type="component" value="Chromosome"/>
</dbReference>
<dbReference type="GO" id="GO:0005737">
    <property type="term" value="C:cytoplasm"/>
    <property type="evidence" value="ECO:0007669"/>
    <property type="project" value="UniProtKB-SubCell"/>
</dbReference>
<dbReference type="GO" id="GO:0005524">
    <property type="term" value="F:ATP binding"/>
    <property type="evidence" value="ECO:0007669"/>
    <property type="project" value="UniProtKB-UniRule"/>
</dbReference>
<dbReference type="GO" id="GO:0004594">
    <property type="term" value="F:pantothenate kinase activity"/>
    <property type="evidence" value="ECO:0007669"/>
    <property type="project" value="UniProtKB-UniRule"/>
</dbReference>
<dbReference type="GO" id="GO:0015937">
    <property type="term" value="P:coenzyme A biosynthetic process"/>
    <property type="evidence" value="ECO:0007669"/>
    <property type="project" value="UniProtKB-UniRule"/>
</dbReference>
<dbReference type="CDD" id="cd02025">
    <property type="entry name" value="PanK"/>
    <property type="match status" value="1"/>
</dbReference>
<dbReference type="FunFam" id="3.40.50.300:FF:000242">
    <property type="entry name" value="Pantothenate kinase"/>
    <property type="match status" value="1"/>
</dbReference>
<dbReference type="Gene3D" id="3.40.50.300">
    <property type="entry name" value="P-loop containing nucleotide triphosphate hydrolases"/>
    <property type="match status" value="1"/>
</dbReference>
<dbReference type="HAMAP" id="MF_00215">
    <property type="entry name" value="Pantothen_kinase_1"/>
    <property type="match status" value="1"/>
</dbReference>
<dbReference type="InterPro" id="IPR027417">
    <property type="entry name" value="P-loop_NTPase"/>
</dbReference>
<dbReference type="InterPro" id="IPR004566">
    <property type="entry name" value="PanK"/>
</dbReference>
<dbReference type="InterPro" id="IPR006083">
    <property type="entry name" value="PRK/URK"/>
</dbReference>
<dbReference type="NCBIfam" id="TIGR00554">
    <property type="entry name" value="panK_bact"/>
    <property type="match status" value="1"/>
</dbReference>
<dbReference type="PANTHER" id="PTHR10285">
    <property type="entry name" value="URIDINE KINASE"/>
    <property type="match status" value="1"/>
</dbReference>
<dbReference type="Pfam" id="PF00485">
    <property type="entry name" value="PRK"/>
    <property type="match status" value="1"/>
</dbReference>
<dbReference type="PIRSF" id="PIRSF000545">
    <property type="entry name" value="Pantothenate_kin"/>
    <property type="match status" value="1"/>
</dbReference>
<dbReference type="SUPFAM" id="SSF52540">
    <property type="entry name" value="P-loop containing nucleoside triphosphate hydrolases"/>
    <property type="match status" value="1"/>
</dbReference>